<evidence type="ECO:0000255" key="1">
    <source>
        <dbReference type="HAMAP-Rule" id="MF_00500"/>
    </source>
</evidence>
<evidence type="ECO:0000256" key="2">
    <source>
        <dbReference type="SAM" id="MobiDB-lite"/>
    </source>
</evidence>
<evidence type="ECO:0000305" key="3"/>
<comment type="function">
    <text evidence="1">Binds directly to 16S ribosomal RNA.</text>
</comment>
<comment type="similarity">
    <text evidence="1">Belongs to the bacterial ribosomal protein bS20 family.</text>
</comment>
<accession>B4SCH0</accession>
<protein>
    <recommendedName>
        <fullName evidence="1">Small ribosomal subunit protein bS20</fullName>
    </recommendedName>
    <alternativeName>
        <fullName evidence="3">30S ribosomal protein S20</fullName>
    </alternativeName>
</protein>
<gene>
    <name evidence="1" type="primary">rpsT</name>
    <name type="ordered locus">Ppha_0424</name>
</gene>
<feature type="chain" id="PRO_1000126489" description="Small ribosomal subunit protein bS20">
    <location>
        <begin position="1"/>
        <end position="91"/>
    </location>
</feature>
<feature type="region of interest" description="Disordered" evidence="2">
    <location>
        <begin position="1"/>
        <end position="26"/>
    </location>
</feature>
<feature type="compositionally biased region" description="Basic and acidic residues" evidence="2">
    <location>
        <begin position="1"/>
        <end position="18"/>
    </location>
</feature>
<name>RS20_PELPB</name>
<sequence length="91" mass="10593">MPLHKSAEKRLRQSERRNARNRSRKKELKVLVKTMQKLIDTSAEKAVVEVAYRSAVQKLDRLGVKNYIHANKASRKKSQLTRLMNSYVKAD</sequence>
<dbReference type="EMBL" id="CP001110">
    <property type="protein sequence ID" value="ACF42750.1"/>
    <property type="molecule type" value="Genomic_DNA"/>
</dbReference>
<dbReference type="RefSeq" id="WP_012507245.1">
    <property type="nucleotide sequence ID" value="NC_011060.1"/>
</dbReference>
<dbReference type="SMR" id="B4SCH0"/>
<dbReference type="STRING" id="324925.Ppha_0424"/>
<dbReference type="KEGG" id="pph:Ppha_0424"/>
<dbReference type="eggNOG" id="COG0268">
    <property type="taxonomic scope" value="Bacteria"/>
</dbReference>
<dbReference type="HOGENOM" id="CLU_160655_3_1_10"/>
<dbReference type="OrthoDB" id="9808392at2"/>
<dbReference type="Proteomes" id="UP000002724">
    <property type="component" value="Chromosome"/>
</dbReference>
<dbReference type="GO" id="GO:0005829">
    <property type="term" value="C:cytosol"/>
    <property type="evidence" value="ECO:0007669"/>
    <property type="project" value="TreeGrafter"/>
</dbReference>
<dbReference type="GO" id="GO:0015935">
    <property type="term" value="C:small ribosomal subunit"/>
    <property type="evidence" value="ECO:0007669"/>
    <property type="project" value="TreeGrafter"/>
</dbReference>
<dbReference type="GO" id="GO:0070181">
    <property type="term" value="F:small ribosomal subunit rRNA binding"/>
    <property type="evidence" value="ECO:0007669"/>
    <property type="project" value="TreeGrafter"/>
</dbReference>
<dbReference type="GO" id="GO:0003735">
    <property type="term" value="F:structural constituent of ribosome"/>
    <property type="evidence" value="ECO:0007669"/>
    <property type="project" value="InterPro"/>
</dbReference>
<dbReference type="GO" id="GO:0006412">
    <property type="term" value="P:translation"/>
    <property type="evidence" value="ECO:0007669"/>
    <property type="project" value="UniProtKB-UniRule"/>
</dbReference>
<dbReference type="Gene3D" id="1.20.58.110">
    <property type="entry name" value="Ribosomal protein S20"/>
    <property type="match status" value="1"/>
</dbReference>
<dbReference type="HAMAP" id="MF_00500">
    <property type="entry name" value="Ribosomal_bS20"/>
    <property type="match status" value="1"/>
</dbReference>
<dbReference type="InterPro" id="IPR002583">
    <property type="entry name" value="Ribosomal_bS20"/>
</dbReference>
<dbReference type="InterPro" id="IPR036510">
    <property type="entry name" value="Ribosomal_bS20_sf"/>
</dbReference>
<dbReference type="NCBIfam" id="TIGR00029">
    <property type="entry name" value="S20"/>
    <property type="match status" value="1"/>
</dbReference>
<dbReference type="PANTHER" id="PTHR33398">
    <property type="entry name" value="30S RIBOSOMAL PROTEIN S20"/>
    <property type="match status" value="1"/>
</dbReference>
<dbReference type="PANTHER" id="PTHR33398:SF1">
    <property type="entry name" value="SMALL RIBOSOMAL SUBUNIT PROTEIN BS20C"/>
    <property type="match status" value="1"/>
</dbReference>
<dbReference type="Pfam" id="PF01649">
    <property type="entry name" value="Ribosomal_S20p"/>
    <property type="match status" value="1"/>
</dbReference>
<dbReference type="SUPFAM" id="SSF46992">
    <property type="entry name" value="Ribosomal protein S20"/>
    <property type="match status" value="1"/>
</dbReference>
<organism>
    <name type="scientific">Pelodictyon phaeoclathratiforme (strain DSM 5477 / BU-1)</name>
    <dbReference type="NCBI Taxonomy" id="324925"/>
    <lineage>
        <taxon>Bacteria</taxon>
        <taxon>Pseudomonadati</taxon>
        <taxon>Chlorobiota</taxon>
        <taxon>Chlorobiia</taxon>
        <taxon>Chlorobiales</taxon>
        <taxon>Chlorobiaceae</taxon>
        <taxon>Chlorobium/Pelodictyon group</taxon>
        <taxon>Pelodictyon</taxon>
    </lineage>
</organism>
<proteinExistence type="inferred from homology"/>
<reference key="1">
    <citation type="submission" date="2008-06" db="EMBL/GenBank/DDBJ databases">
        <title>Complete sequence of Pelodictyon phaeoclathratiforme BU-1.</title>
        <authorList>
            <consortium name="US DOE Joint Genome Institute"/>
            <person name="Lucas S."/>
            <person name="Copeland A."/>
            <person name="Lapidus A."/>
            <person name="Glavina del Rio T."/>
            <person name="Dalin E."/>
            <person name="Tice H."/>
            <person name="Bruce D."/>
            <person name="Goodwin L."/>
            <person name="Pitluck S."/>
            <person name="Schmutz J."/>
            <person name="Larimer F."/>
            <person name="Land M."/>
            <person name="Hauser L."/>
            <person name="Kyrpides N."/>
            <person name="Mikhailova N."/>
            <person name="Liu Z."/>
            <person name="Li T."/>
            <person name="Zhao F."/>
            <person name="Overmann J."/>
            <person name="Bryant D.A."/>
            <person name="Richardson P."/>
        </authorList>
    </citation>
    <scope>NUCLEOTIDE SEQUENCE [LARGE SCALE GENOMIC DNA]</scope>
    <source>
        <strain>DSM 5477 / BU-1</strain>
    </source>
</reference>
<keyword id="KW-1185">Reference proteome</keyword>
<keyword id="KW-0687">Ribonucleoprotein</keyword>
<keyword id="KW-0689">Ribosomal protein</keyword>
<keyword id="KW-0694">RNA-binding</keyword>
<keyword id="KW-0699">rRNA-binding</keyword>